<gene>
    <name type="primary">RH11</name>
    <name type="ordered locus">At3g58510</name>
    <name type="ORF">F14P22.100</name>
</gene>
<reference key="1">
    <citation type="journal article" date="2000" name="Nature">
        <title>Sequence and analysis of chromosome 3 of the plant Arabidopsis thaliana.</title>
        <authorList>
            <person name="Salanoubat M."/>
            <person name="Lemcke K."/>
            <person name="Rieger M."/>
            <person name="Ansorge W."/>
            <person name="Unseld M."/>
            <person name="Fartmann B."/>
            <person name="Valle G."/>
            <person name="Bloecker H."/>
            <person name="Perez-Alonso M."/>
            <person name="Obermaier B."/>
            <person name="Delseny M."/>
            <person name="Boutry M."/>
            <person name="Grivell L.A."/>
            <person name="Mache R."/>
            <person name="Puigdomenech P."/>
            <person name="De Simone V."/>
            <person name="Choisne N."/>
            <person name="Artiguenave F."/>
            <person name="Robert C."/>
            <person name="Brottier P."/>
            <person name="Wincker P."/>
            <person name="Cattolico L."/>
            <person name="Weissenbach J."/>
            <person name="Saurin W."/>
            <person name="Quetier F."/>
            <person name="Schaefer M."/>
            <person name="Mueller-Auer S."/>
            <person name="Gabel C."/>
            <person name="Fuchs M."/>
            <person name="Benes V."/>
            <person name="Wurmbach E."/>
            <person name="Drzonek H."/>
            <person name="Erfle H."/>
            <person name="Jordan N."/>
            <person name="Bangert S."/>
            <person name="Wiedelmann R."/>
            <person name="Kranz H."/>
            <person name="Voss H."/>
            <person name="Holland R."/>
            <person name="Brandt P."/>
            <person name="Nyakatura G."/>
            <person name="Vezzi A."/>
            <person name="D'Angelo M."/>
            <person name="Pallavicini A."/>
            <person name="Toppo S."/>
            <person name="Simionati B."/>
            <person name="Conrad A."/>
            <person name="Hornischer K."/>
            <person name="Kauer G."/>
            <person name="Loehnert T.-H."/>
            <person name="Nordsiek G."/>
            <person name="Reichelt J."/>
            <person name="Scharfe M."/>
            <person name="Schoen O."/>
            <person name="Bargues M."/>
            <person name="Terol J."/>
            <person name="Climent J."/>
            <person name="Navarro P."/>
            <person name="Collado C."/>
            <person name="Perez-Perez A."/>
            <person name="Ottenwaelder B."/>
            <person name="Duchemin D."/>
            <person name="Cooke R."/>
            <person name="Laudie M."/>
            <person name="Berger-Llauro C."/>
            <person name="Purnelle B."/>
            <person name="Masuy D."/>
            <person name="de Haan M."/>
            <person name="Maarse A.C."/>
            <person name="Alcaraz J.-P."/>
            <person name="Cottet A."/>
            <person name="Casacuberta E."/>
            <person name="Monfort A."/>
            <person name="Argiriou A."/>
            <person name="Flores M."/>
            <person name="Liguori R."/>
            <person name="Vitale D."/>
            <person name="Mannhaupt G."/>
            <person name="Haase D."/>
            <person name="Schoof H."/>
            <person name="Rudd S."/>
            <person name="Zaccaria P."/>
            <person name="Mewes H.-W."/>
            <person name="Mayer K.F.X."/>
            <person name="Kaul S."/>
            <person name="Town C.D."/>
            <person name="Koo H.L."/>
            <person name="Tallon L.J."/>
            <person name="Jenkins J."/>
            <person name="Rooney T."/>
            <person name="Rizzo M."/>
            <person name="Walts A."/>
            <person name="Utterback T."/>
            <person name="Fujii C.Y."/>
            <person name="Shea T.P."/>
            <person name="Creasy T.H."/>
            <person name="Haas B."/>
            <person name="Maiti R."/>
            <person name="Wu D."/>
            <person name="Peterson J."/>
            <person name="Van Aken S."/>
            <person name="Pai G."/>
            <person name="Militscher J."/>
            <person name="Sellers P."/>
            <person name="Gill J.E."/>
            <person name="Feldblyum T.V."/>
            <person name="Preuss D."/>
            <person name="Lin X."/>
            <person name="Nierman W.C."/>
            <person name="Salzberg S.L."/>
            <person name="White O."/>
            <person name="Venter J.C."/>
            <person name="Fraser C.M."/>
            <person name="Kaneko T."/>
            <person name="Nakamura Y."/>
            <person name="Sato S."/>
            <person name="Kato T."/>
            <person name="Asamizu E."/>
            <person name="Sasamoto S."/>
            <person name="Kimura T."/>
            <person name="Idesawa K."/>
            <person name="Kawashima K."/>
            <person name="Kishida Y."/>
            <person name="Kiyokawa C."/>
            <person name="Kohara M."/>
            <person name="Matsumoto M."/>
            <person name="Matsuno A."/>
            <person name="Muraki A."/>
            <person name="Nakayama S."/>
            <person name="Nakazaki N."/>
            <person name="Shinpo S."/>
            <person name="Takeuchi C."/>
            <person name="Wada T."/>
            <person name="Watanabe A."/>
            <person name="Yamada M."/>
            <person name="Yasuda M."/>
            <person name="Tabata S."/>
        </authorList>
    </citation>
    <scope>NUCLEOTIDE SEQUENCE [LARGE SCALE GENOMIC DNA]</scope>
    <source>
        <strain>cv. Columbia</strain>
    </source>
</reference>
<reference key="2">
    <citation type="journal article" date="2017" name="Plant J.">
        <title>Araport11: a complete reannotation of the Arabidopsis thaliana reference genome.</title>
        <authorList>
            <person name="Cheng C.Y."/>
            <person name="Krishnakumar V."/>
            <person name="Chan A.P."/>
            <person name="Thibaud-Nissen F."/>
            <person name="Schobel S."/>
            <person name="Town C.D."/>
        </authorList>
    </citation>
    <scope>GENOME REANNOTATION</scope>
    <source>
        <strain>cv. Columbia</strain>
    </source>
</reference>
<reference key="3">
    <citation type="submission" date="2002-03" db="EMBL/GenBank/DDBJ databases">
        <title>Full-length cDNA from Arabidopsis thaliana.</title>
        <authorList>
            <person name="Brover V.V."/>
            <person name="Troukhan M.E."/>
            <person name="Alexandrov N.A."/>
            <person name="Lu Y.-P."/>
            <person name="Flavell R.B."/>
            <person name="Feldmann K.A."/>
        </authorList>
    </citation>
    <scope>NUCLEOTIDE SEQUENCE [LARGE SCALE MRNA]</scope>
</reference>
<reference key="4">
    <citation type="journal article" date="2003" name="Science">
        <title>Empirical analysis of transcriptional activity in the Arabidopsis genome.</title>
        <authorList>
            <person name="Yamada K."/>
            <person name="Lim J."/>
            <person name="Dale J.M."/>
            <person name="Chen H."/>
            <person name="Shinn P."/>
            <person name="Palm C.J."/>
            <person name="Southwick A.M."/>
            <person name="Wu H.C."/>
            <person name="Kim C.J."/>
            <person name="Nguyen M."/>
            <person name="Pham P.K."/>
            <person name="Cheuk R.F."/>
            <person name="Karlin-Newmann G."/>
            <person name="Liu S.X."/>
            <person name="Lam B."/>
            <person name="Sakano H."/>
            <person name="Wu T."/>
            <person name="Yu G."/>
            <person name="Miranda M."/>
            <person name="Quach H.L."/>
            <person name="Tripp M."/>
            <person name="Chang C.H."/>
            <person name="Lee J.M."/>
            <person name="Toriumi M.J."/>
            <person name="Chan M.M."/>
            <person name="Tang C.C."/>
            <person name="Onodera C.S."/>
            <person name="Deng J.M."/>
            <person name="Akiyama K."/>
            <person name="Ansari Y."/>
            <person name="Arakawa T."/>
            <person name="Banh J."/>
            <person name="Banno F."/>
            <person name="Bowser L."/>
            <person name="Brooks S.Y."/>
            <person name="Carninci P."/>
            <person name="Chao Q."/>
            <person name="Choy N."/>
            <person name="Enju A."/>
            <person name="Goldsmith A.D."/>
            <person name="Gurjal M."/>
            <person name="Hansen N.F."/>
            <person name="Hayashizaki Y."/>
            <person name="Johnson-Hopson C."/>
            <person name="Hsuan V.W."/>
            <person name="Iida K."/>
            <person name="Karnes M."/>
            <person name="Khan S."/>
            <person name="Koesema E."/>
            <person name="Ishida J."/>
            <person name="Jiang P.X."/>
            <person name="Jones T."/>
            <person name="Kawai J."/>
            <person name="Kamiya A."/>
            <person name="Meyers C."/>
            <person name="Nakajima M."/>
            <person name="Narusaka M."/>
            <person name="Seki M."/>
            <person name="Sakurai T."/>
            <person name="Satou M."/>
            <person name="Tamse R."/>
            <person name="Vaysberg M."/>
            <person name="Wallender E.K."/>
            <person name="Wong C."/>
            <person name="Yamamura Y."/>
            <person name="Yuan S."/>
            <person name="Shinozaki K."/>
            <person name="Davis R.W."/>
            <person name="Theologis A."/>
            <person name="Ecker J.R."/>
        </authorList>
    </citation>
    <scope>NUCLEOTIDE SEQUENCE [LARGE SCALE MRNA] OF 105-612</scope>
    <source>
        <strain>cv. Columbia</strain>
    </source>
</reference>
<reference key="5">
    <citation type="journal article" date="1999" name="Nucleic Acids Res.">
        <title>The DEAD box RNA helicase family in Arabidopsis thaliana.</title>
        <authorList>
            <person name="Aubourg S."/>
            <person name="Kreis M."/>
            <person name="Lecharny A."/>
        </authorList>
    </citation>
    <scope>NUCLEOTIDE SEQUENCE [MRNA] OF 389-612</scope>
    <source>
        <strain>cv. Columbia</strain>
    </source>
</reference>
<reference key="6">
    <citation type="journal article" date="2004" name="Plant Biotechnol. J.">
        <title>DEAD-box RNA helicases in Arabidopsis thaliana: establishing a link between quantitative expression, gene structure and evolution of a family of genes.</title>
        <authorList>
            <person name="Mingam A."/>
            <person name="Toffano-Nioche C."/>
            <person name="Brunaud V."/>
            <person name="Boudet N."/>
            <person name="Kreis M."/>
            <person name="Lecharny A."/>
        </authorList>
    </citation>
    <scope>GENE FAMILY</scope>
    <scope>NOMENCLATURE</scope>
</reference>
<reference key="7">
    <citation type="journal article" date="2007" name="Mol. Cell. Proteomics">
        <title>Multidimensional protein identification technology (MudPIT) analysis of ubiquitinated proteins in plants.</title>
        <authorList>
            <person name="Maor R."/>
            <person name="Jones A."/>
            <person name="Nuehse T.S."/>
            <person name="Studholme D.J."/>
            <person name="Peck S.C."/>
            <person name="Shirasu K."/>
        </authorList>
    </citation>
    <scope>IDENTIFICATION BY MASS SPECTROMETRY [LARGE SCALE ANALYSIS]</scope>
    <source>
        <strain>cv. Landsberg erecta</strain>
    </source>
</reference>
<reference key="8">
    <citation type="journal article" date="2012" name="Mol. Cell. Proteomics">
        <title>Comparative large-scale characterisation of plant vs. mammal proteins reveals similar and idiosyncratic N-alpha acetylation features.</title>
        <authorList>
            <person name="Bienvenut W.V."/>
            <person name="Sumpton D."/>
            <person name="Martinez A."/>
            <person name="Lilla S."/>
            <person name="Espagne C."/>
            <person name="Meinnel T."/>
            <person name="Giglione C."/>
        </authorList>
    </citation>
    <scope>ACETYLATION [LARGE SCALE ANALYSIS] AT SER-2</scope>
    <scope>CLEAVAGE OF INITIATOR METHIONINE [LARGE SCALE ANALYSIS]</scope>
    <scope>IDENTIFICATION BY MASS SPECTROMETRY [LARGE SCALE ANALYSIS]</scope>
</reference>
<reference key="9">
    <citation type="journal article" date="2013" name="PLoS ONE">
        <title>Genome-wide comparative in silico analysis of the RNA helicase gene family in Zea mays and Glycine max: a comparison with Arabidopsis and Oryza sativa.</title>
        <authorList>
            <person name="Xu R."/>
            <person name="Zhang S."/>
            <person name="Huang J."/>
            <person name="Zheng C."/>
        </authorList>
    </citation>
    <scope>GENE FAMILY</scope>
</reference>
<accession>Q8LA13</accession>
<accession>Q8W4P3</accession>
<accession>Q9M2G5</accession>
<accession>Q9ZS09</accession>
<name>RH11_ARATH</name>
<sequence length="612" mass="66026">MSASWADVADSEKAVSQSKPPYVPPHLRNRPSEPVAAPLPQNDHAGYGGQPAGSRWAPPSSGGGGASGGGYRNDGGRTGYGYGAGGGGGGGGGWNNRSGGWDRREREVNPFGDDAELEPVFTEQENTGINFDAYEDIPVETSGGDVPPPVNTFADIDLGDALNLNIRRCKYVRPTPVQRHAIPILLAERDLMACAQTGSGKTAAFCFPIISGIMKDQHVERPRGSRAVYPFAVILSPTRELACQIHDEAKKFSYQTGVKVVVAYGGTPIHQQLRELERGCDILVATPGRLNDLLERARVSMQMIRFLALDEADRMLDMGFEPQIRKIVEQMDMPPRGVRQTMLFSATFPSQIQRLAADFMSNYIFLAVGRVGSSTDLITQRVEFVQESDKRSHLMDLLHAQRETQDKQSLTLVFVETKRGADTLENWLCMNEFPATSIHGDRTQQEREVALRSFKTGRTPILVATDVAARGLDIPHVAHVVNFDLPNDIDDYVHRIGRTGRAGKSGIATAFFNENNAQLARSLAELMQEANQEVPEWLTRYASRASFGGGKKRSGGRFGGRDFRREGSYSRGGGGGGGGGGSDYYGGGGYGGGGYGGAPSGGYGAGVTSAWD</sequence>
<proteinExistence type="evidence at protein level"/>
<comment type="catalytic activity">
    <reaction>
        <text>ATP + H2O = ADP + phosphate + H(+)</text>
        <dbReference type="Rhea" id="RHEA:13065"/>
        <dbReference type="ChEBI" id="CHEBI:15377"/>
        <dbReference type="ChEBI" id="CHEBI:15378"/>
        <dbReference type="ChEBI" id="CHEBI:30616"/>
        <dbReference type="ChEBI" id="CHEBI:43474"/>
        <dbReference type="ChEBI" id="CHEBI:456216"/>
        <dbReference type="EC" id="3.6.4.13"/>
    </reaction>
</comment>
<comment type="domain">
    <text>The Q motif is unique to and characteristic of the DEAD box family of RNA helicases and controls ATP binding and hydrolysis.</text>
</comment>
<comment type="similarity">
    <text evidence="4">Belongs to the DEAD box helicase family. DDX3/DED1 subfamily.</text>
</comment>
<comment type="sequence caution" evidence="4">
    <conflict type="frameshift">
        <sequence resource="EMBL-CDS" id="AAL32524"/>
    </conflict>
</comment>
<comment type="sequence caution" evidence="4">
    <conflict type="erroneous initiation">
        <sequence resource="EMBL-CDS" id="AAM47956"/>
    </conflict>
</comment>
<comment type="sequence caution" evidence="4">
    <conflict type="erroneous gene model prediction">
        <sequence resource="EMBL-CDS" id="CAB68189"/>
    </conflict>
</comment>
<feature type="initiator methionine" description="Removed" evidence="5">
    <location>
        <position position="1"/>
    </location>
</feature>
<feature type="chain" id="PRO_0000239153" description="DEAD-box ATP-dependent RNA helicase 11">
    <location>
        <begin position="2"/>
        <end position="612"/>
    </location>
</feature>
<feature type="domain" description="Helicase ATP-binding" evidence="1">
    <location>
        <begin position="182"/>
        <end position="366"/>
    </location>
</feature>
<feature type="domain" description="Helicase C-terminal" evidence="2">
    <location>
        <begin position="377"/>
        <end position="542"/>
    </location>
</feature>
<feature type="region of interest" description="Disordered" evidence="3">
    <location>
        <begin position="1"/>
        <end position="70"/>
    </location>
</feature>
<feature type="region of interest" description="Disordered" evidence="3">
    <location>
        <begin position="83"/>
        <end position="104"/>
    </location>
</feature>
<feature type="region of interest" description="Disordered" evidence="3">
    <location>
        <begin position="547"/>
        <end position="583"/>
    </location>
</feature>
<feature type="short sequence motif" description="Q motif">
    <location>
        <begin position="151"/>
        <end position="179"/>
    </location>
</feature>
<feature type="short sequence motif" description="DEAD box">
    <location>
        <begin position="310"/>
        <end position="313"/>
    </location>
</feature>
<feature type="compositionally biased region" description="Gly residues" evidence="3">
    <location>
        <begin position="61"/>
        <end position="70"/>
    </location>
</feature>
<feature type="compositionally biased region" description="Gly residues" evidence="3">
    <location>
        <begin position="83"/>
        <end position="94"/>
    </location>
</feature>
<feature type="compositionally biased region" description="Basic and acidic residues" evidence="3">
    <location>
        <begin position="559"/>
        <end position="568"/>
    </location>
</feature>
<feature type="compositionally biased region" description="Gly residues" evidence="3">
    <location>
        <begin position="570"/>
        <end position="583"/>
    </location>
</feature>
<feature type="binding site" evidence="1">
    <location>
        <begin position="195"/>
        <end position="202"/>
    </location>
    <ligand>
        <name>ATP</name>
        <dbReference type="ChEBI" id="CHEBI:30616"/>
    </ligand>
</feature>
<feature type="modified residue" description="N-acetylserine" evidence="5">
    <location>
        <position position="2"/>
    </location>
</feature>
<feature type="sequence conflict" description="In Ref. 4; AAL32524/AAM47956." evidence="4" ref="4">
    <original>A</original>
    <variation>V</variation>
    <location>
        <position position="227"/>
    </location>
</feature>
<protein>
    <recommendedName>
        <fullName>DEAD-box ATP-dependent RNA helicase 11</fullName>
        <ecNumber>3.6.4.13</ecNumber>
    </recommendedName>
</protein>
<keyword id="KW-0007">Acetylation</keyword>
<keyword id="KW-0067">ATP-binding</keyword>
<keyword id="KW-0347">Helicase</keyword>
<keyword id="KW-0378">Hydrolase</keyword>
<keyword id="KW-0547">Nucleotide-binding</keyword>
<keyword id="KW-1185">Reference proteome</keyword>
<keyword id="KW-0694">RNA-binding</keyword>
<evidence type="ECO:0000255" key="1">
    <source>
        <dbReference type="PROSITE-ProRule" id="PRU00541"/>
    </source>
</evidence>
<evidence type="ECO:0000255" key="2">
    <source>
        <dbReference type="PROSITE-ProRule" id="PRU00542"/>
    </source>
</evidence>
<evidence type="ECO:0000256" key="3">
    <source>
        <dbReference type="SAM" id="MobiDB-lite"/>
    </source>
</evidence>
<evidence type="ECO:0000305" key="4"/>
<evidence type="ECO:0007744" key="5">
    <source>
    </source>
</evidence>
<dbReference type="EC" id="3.6.4.13"/>
<dbReference type="EMBL" id="AL137082">
    <property type="protein sequence ID" value="CAB68189.1"/>
    <property type="status" value="ALT_SEQ"/>
    <property type="molecule type" value="Genomic_DNA"/>
</dbReference>
<dbReference type="EMBL" id="CP002686">
    <property type="protein sequence ID" value="AEE79791.1"/>
    <property type="molecule type" value="Genomic_DNA"/>
</dbReference>
<dbReference type="EMBL" id="CP002686">
    <property type="protein sequence ID" value="AEE79792.1"/>
    <property type="molecule type" value="Genomic_DNA"/>
</dbReference>
<dbReference type="EMBL" id="CP002686">
    <property type="protein sequence ID" value="AEE79793.1"/>
    <property type="molecule type" value="Genomic_DNA"/>
</dbReference>
<dbReference type="EMBL" id="AY088091">
    <property type="protein sequence ID" value="AAM65637.1"/>
    <property type="molecule type" value="mRNA"/>
</dbReference>
<dbReference type="EMBL" id="AY062446">
    <property type="protein sequence ID" value="AAL32524.1"/>
    <property type="status" value="ALT_FRAME"/>
    <property type="molecule type" value="mRNA"/>
</dbReference>
<dbReference type="EMBL" id="AY114637">
    <property type="protein sequence ID" value="AAM47956.1"/>
    <property type="status" value="ALT_INIT"/>
    <property type="molecule type" value="mRNA"/>
</dbReference>
<dbReference type="EMBL" id="AJ010463">
    <property type="protein sequence ID" value="CAA09202.1"/>
    <property type="molecule type" value="mRNA"/>
</dbReference>
<dbReference type="PIR" id="T45671">
    <property type="entry name" value="T45671"/>
</dbReference>
<dbReference type="PIR" id="T51742">
    <property type="entry name" value="T51742"/>
</dbReference>
<dbReference type="RefSeq" id="NP_001030884.1">
    <property type="nucleotide sequence ID" value="NM_001035807.1"/>
</dbReference>
<dbReference type="RefSeq" id="NP_567067.1">
    <property type="nucleotide sequence ID" value="NM_115713.2"/>
</dbReference>
<dbReference type="RefSeq" id="NP_974455.1">
    <property type="nucleotide sequence ID" value="NM_202726.2"/>
</dbReference>
<dbReference type="SMR" id="Q8LA13"/>
<dbReference type="BioGRID" id="10335">
    <property type="interactions" value="10"/>
</dbReference>
<dbReference type="FunCoup" id="Q8LA13">
    <property type="interactions" value="3795"/>
</dbReference>
<dbReference type="IntAct" id="Q8LA13">
    <property type="interactions" value="1"/>
</dbReference>
<dbReference type="STRING" id="3702.Q8LA13"/>
<dbReference type="GlyGen" id="Q8LA13">
    <property type="glycosylation" value="1 site"/>
</dbReference>
<dbReference type="iPTMnet" id="Q8LA13"/>
<dbReference type="PaxDb" id="3702-AT3G58510.2"/>
<dbReference type="ProteomicsDB" id="236907"/>
<dbReference type="EnsemblPlants" id="AT3G58510.1">
    <property type="protein sequence ID" value="AT3G58510.1"/>
    <property type="gene ID" value="AT3G58510"/>
</dbReference>
<dbReference type="EnsemblPlants" id="AT3G58510.2">
    <property type="protein sequence ID" value="AT3G58510.2"/>
    <property type="gene ID" value="AT3G58510"/>
</dbReference>
<dbReference type="EnsemblPlants" id="AT3G58510.3">
    <property type="protein sequence ID" value="AT3G58510.3"/>
    <property type="gene ID" value="AT3G58510"/>
</dbReference>
<dbReference type="GeneID" id="825020"/>
<dbReference type="Gramene" id="AT3G58510.1">
    <property type="protein sequence ID" value="AT3G58510.1"/>
    <property type="gene ID" value="AT3G58510"/>
</dbReference>
<dbReference type="Gramene" id="AT3G58510.2">
    <property type="protein sequence ID" value="AT3G58510.2"/>
    <property type="gene ID" value="AT3G58510"/>
</dbReference>
<dbReference type="Gramene" id="AT3G58510.3">
    <property type="protein sequence ID" value="AT3G58510.3"/>
    <property type="gene ID" value="AT3G58510"/>
</dbReference>
<dbReference type="KEGG" id="ath:AT3G58510"/>
<dbReference type="Araport" id="AT3G58510"/>
<dbReference type="TAIR" id="AT3G58510">
    <property type="gene designation" value="RH11"/>
</dbReference>
<dbReference type="eggNOG" id="KOG0335">
    <property type="taxonomic scope" value="Eukaryota"/>
</dbReference>
<dbReference type="HOGENOM" id="CLU_003041_16_3_1"/>
<dbReference type="InParanoid" id="Q8LA13"/>
<dbReference type="OMA" id="CYRSWVR"/>
<dbReference type="OrthoDB" id="196131at2759"/>
<dbReference type="PhylomeDB" id="Q8LA13"/>
<dbReference type="CD-CODE" id="4299E36E">
    <property type="entry name" value="Nucleolus"/>
</dbReference>
<dbReference type="PRO" id="PR:Q8LA13"/>
<dbReference type="Proteomes" id="UP000006548">
    <property type="component" value="Chromosome 3"/>
</dbReference>
<dbReference type="ExpressionAtlas" id="Q8LA13">
    <property type="expression patterns" value="baseline and differential"/>
</dbReference>
<dbReference type="GO" id="GO:0005829">
    <property type="term" value="C:cytosol"/>
    <property type="evidence" value="ECO:0007005"/>
    <property type="project" value="TAIR"/>
</dbReference>
<dbReference type="GO" id="GO:0005730">
    <property type="term" value="C:nucleolus"/>
    <property type="evidence" value="ECO:0007005"/>
    <property type="project" value="TAIR"/>
</dbReference>
<dbReference type="GO" id="GO:0005777">
    <property type="term" value="C:peroxisome"/>
    <property type="evidence" value="ECO:0007005"/>
    <property type="project" value="TAIR"/>
</dbReference>
<dbReference type="GO" id="GO:0005524">
    <property type="term" value="F:ATP binding"/>
    <property type="evidence" value="ECO:0007669"/>
    <property type="project" value="UniProtKB-KW"/>
</dbReference>
<dbReference type="GO" id="GO:0016887">
    <property type="term" value="F:ATP hydrolysis activity"/>
    <property type="evidence" value="ECO:0007669"/>
    <property type="project" value="RHEA"/>
</dbReference>
<dbReference type="GO" id="GO:0003729">
    <property type="term" value="F:mRNA binding"/>
    <property type="evidence" value="ECO:0000314"/>
    <property type="project" value="TAIR"/>
</dbReference>
<dbReference type="GO" id="GO:0003724">
    <property type="term" value="F:RNA helicase activity"/>
    <property type="evidence" value="ECO:0007669"/>
    <property type="project" value="UniProtKB-EC"/>
</dbReference>
<dbReference type="CDD" id="cd17967">
    <property type="entry name" value="DEADc_DDX3_DDX4"/>
    <property type="match status" value="1"/>
</dbReference>
<dbReference type="CDD" id="cd18787">
    <property type="entry name" value="SF2_C_DEAD"/>
    <property type="match status" value="1"/>
</dbReference>
<dbReference type="FunFam" id="3.40.50.300:FF:000008">
    <property type="entry name" value="ATP-dependent RNA helicase RhlB"/>
    <property type="match status" value="1"/>
</dbReference>
<dbReference type="FunFam" id="3.40.50.300:FF:000397">
    <property type="entry name" value="Probable ATP-dependent RNA helicase DDX4"/>
    <property type="match status" value="1"/>
</dbReference>
<dbReference type="Gene3D" id="3.40.50.300">
    <property type="entry name" value="P-loop containing nucleotide triphosphate hydrolases"/>
    <property type="match status" value="2"/>
</dbReference>
<dbReference type="InterPro" id="IPR011545">
    <property type="entry name" value="DEAD/DEAH_box_helicase_dom"/>
</dbReference>
<dbReference type="InterPro" id="IPR044763">
    <property type="entry name" value="Ded1/Dbp1_DEADc"/>
</dbReference>
<dbReference type="InterPro" id="IPR014001">
    <property type="entry name" value="Helicase_ATP-bd"/>
</dbReference>
<dbReference type="InterPro" id="IPR001650">
    <property type="entry name" value="Helicase_C-like"/>
</dbReference>
<dbReference type="InterPro" id="IPR027417">
    <property type="entry name" value="P-loop_NTPase"/>
</dbReference>
<dbReference type="InterPro" id="IPR014014">
    <property type="entry name" value="RNA_helicase_DEAD_Q_motif"/>
</dbReference>
<dbReference type="PANTHER" id="PTHR47958">
    <property type="entry name" value="ATP-DEPENDENT RNA HELICASE DBP3"/>
    <property type="match status" value="1"/>
</dbReference>
<dbReference type="Pfam" id="PF00270">
    <property type="entry name" value="DEAD"/>
    <property type="match status" value="1"/>
</dbReference>
<dbReference type="Pfam" id="PF00271">
    <property type="entry name" value="Helicase_C"/>
    <property type="match status" value="1"/>
</dbReference>
<dbReference type="SMART" id="SM00487">
    <property type="entry name" value="DEXDc"/>
    <property type="match status" value="1"/>
</dbReference>
<dbReference type="SMART" id="SM00490">
    <property type="entry name" value="HELICc"/>
    <property type="match status" value="1"/>
</dbReference>
<dbReference type="SUPFAM" id="SSF52540">
    <property type="entry name" value="P-loop containing nucleoside triphosphate hydrolases"/>
    <property type="match status" value="1"/>
</dbReference>
<dbReference type="PROSITE" id="PS51192">
    <property type="entry name" value="HELICASE_ATP_BIND_1"/>
    <property type="match status" value="1"/>
</dbReference>
<dbReference type="PROSITE" id="PS51194">
    <property type="entry name" value="HELICASE_CTER"/>
    <property type="match status" value="1"/>
</dbReference>
<dbReference type="PROSITE" id="PS51195">
    <property type="entry name" value="Q_MOTIF"/>
    <property type="match status" value="1"/>
</dbReference>
<organism>
    <name type="scientific">Arabidopsis thaliana</name>
    <name type="common">Mouse-ear cress</name>
    <dbReference type="NCBI Taxonomy" id="3702"/>
    <lineage>
        <taxon>Eukaryota</taxon>
        <taxon>Viridiplantae</taxon>
        <taxon>Streptophyta</taxon>
        <taxon>Embryophyta</taxon>
        <taxon>Tracheophyta</taxon>
        <taxon>Spermatophyta</taxon>
        <taxon>Magnoliopsida</taxon>
        <taxon>eudicotyledons</taxon>
        <taxon>Gunneridae</taxon>
        <taxon>Pentapetalae</taxon>
        <taxon>rosids</taxon>
        <taxon>malvids</taxon>
        <taxon>Brassicales</taxon>
        <taxon>Brassicaceae</taxon>
        <taxon>Camelineae</taxon>
        <taxon>Arabidopsis</taxon>
    </lineage>
</organism>